<protein>
    <recommendedName>
        <fullName evidence="1">Small ribosomal subunit protein uS17</fullName>
    </recommendedName>
    <alternativeName>
        <fullName evidence="2">30S ribosomal protein S17</fullName>
    </alternativeName>
</protein>
<accession>A7HM43</accession>
<dbReference type="EMBL" id="CP000771">
    <property type="protein sequence ID" value="ABS60976.1"/>
    <property type="molecule type" value="Genomic_DNA"/>
</dbReference>
<dbReference type="RefSeq" id="WP_011994289.1">
    <property type="nucleotide sequence ID" value="NC_009718.1"/>
</dbReference>
<dbReference type="SMR" id="A7HM43"/>
<dbReference type="STRING" id="381764.Fnod_1129"/>
<dbReference type="KEGG" id="fno:Fnod_1129"/>
<dbReference type="eggNOG" id="COG0186">
    <property type="taxonomic scope" value="Bacteria"/>
</dbReference>
<dbReference type="HOGENOM" id="CLU_073626_1_2_0"/>
<dbReference type="OrthoDB" id="9811714at2"/>
<dbReference type="Proteomes" id="UP000002415">
    <property type="component" value="Chromosome"/>
</dbReference>
<dbReference type="GO" id="GO:0022627">
    <property type="term" value="C:cytosolic small ribosomal subunit"/>
    <property type="evidence" value="ECO:0007669"/>
    <property type="project" value="TreeGrafter"/>
</dbReference>
<dbReference type="GO" id="GO:0019843">
    <property type="term" value="F:rRNA binding"/>
    <property type="evidence" value="ECO:0007669"/>
    <property type="project" value="UniProtKB-UniRule"/>
</dbReference>
<dbReference type="GO" id="GO:0003735">
    <property type="term" value="F:structural constituent of ribosome"/>
    <property type="evidence" value="ECO:0007669"/>
    <property type="project" value="InterPro"/>
</dbReference>
<dbReference type="GO" id="GO:0006412">
    <property type="term" value="P:translation"/>
    <property type="evidence" value="ECO:0007669"/>
    <property type="project" value="UniProtKB-UniRule"/>
</dbReference>
<dbReference type="CDD" id="cd00364">
    <property type="entry name" value="Ribosomal_uS17"/>
    <property type="match status" value="1"/>
</dbReference>
<dbReference type="Gene3D" id="2.40.50.140">
    <property type="entry name" value="Nucleic acid-binding proteins"/>
    <property type="match status" value="1"/>
</dbReference>
<dbReference type="HAMAP" id="MF_01345_B">
    <property type="entry name" value="Ribosomal_uS17_B"/>
    <property type="match status" value="1"/>
</dbReference>
<dbReference type="InterPro" id="IPR012340">
    <property type="entry name" value="NA-bd_OB-fold"/>
</dbReference>
<dbReference type="InterPro" id="IPR000266">
    <property type="entry name" value="Ribosomal_uS17"/>
</dbReference>
<dbReference type="InterPro" id="IPR019984">
    <property type="entry name" value="Ribosomal_uS17_bact/chlr"/>
</dbReference>
<dbReference type="InterPro" id="IPR019979">
    <property type="entry name" value="Ribosomal_uS17_CS"/>
</dbReference>
<dbReference type="NCBIfam" id="NF004123">
    <property type="entry name" value="PRK05610.1"/>
    <property type="match status" value="1"/>
</dbReference>
<dbReference type="NCBIfam" id="TIGR03635">
    <property type="entry name" value="uS17_bact"/>
    <property type="match status" value="1"/>
</dbReference>
<dbReference type="PANTHER" id="PTHR10744">
    <property type="entry name" value="40S RIBOSOMAL PROTEIN S11 FAMILY MEMBER"/>
    <property type="match status" value="1"/>
</dbReference>
<dbReference type="PANTHER" id="PTHR10744:SF1">
    <property type="entry name" value="SMALL RIBOSOMAL SUBUNIT PROTEIN US17M"/>
    <property type="match status" value="1"/>
</dbReference>
<dbReference type="Pfam" id="PF00366">
    <property type="entry name" value="Ribosomal_S17"/>
    <property type="match status" value="1"/>
</dbReference>
<dbReference type="PRINTS" id="PR00973">
    <property type="entry name" value="RIBOSOMALS17"/>
</dbReference>
<dbReference type="SUPFAM" id="SSF50249">
    <property type="entry name" value="Nucleic acid-binding proteins"/>
    <property type="match status" value="1"/>
</dbReference>
<dbReference type="PROSITE" id="PS00056">
    <property type="entry name" value="RIBOSOMAL_S17"/>
    <property type="match status" value="1"/>
</dbReference>
<gene>
    <name evidence="1" type="primary">rpsQ</name>
    <name type="ordered locus">Fnod_1129</name>
</gene>
<comment type="function">
    <text evidence="1">One of the primary rRNA binding proteins, it binds specifically to the 5'-end of 16S ribosomal RNA.</text>
</comment>
<comment type="subunit">
    <text evidence="1">Part of the 30S ribosomal subunit.</text>
</comment>
<comment type="similarity">
    <text evidence="1">Belongs to the universal ribosomal protein uS17 family.</text>
</comment>
<name>RS17_FERNB</name>
<feature type="chain" id="PRO_1000073343" description="Small ribosomal subunit protein uS17">
    <location>
        <begin position="1"/>
        <end position="100"/>
    </location>
</feature>
<keyword id="KW-1185">Reference proteome</keyword>
<keyword id="KW-0687">Ribonucleoprotein</keyword>
<keyword id="KW-0689">Ribosomal protein</keyword>
<keyword id="KW-0694">RNA-binding</keyword>
<keyword id="KW-0699">rRNA-binding</keyword>
<organism>
    <name type="scientific">Fervidobacterium nodosum (strain ATCC 35602 / DSM 5306 / Rt17-B1)</name>
    <dbReference type="NCBI Taxonomy" id="381764"/>
    <lineage>
        <taxon>Bacteria</taxon>
        <taxon>Thermotogati</taxon>
        <taxon>Thermotogota</taxon>
        <taxon>Thermotogae</taxon>
        <taxon>Thermotogales</taxon>
        <taxon>Fervidobacteriaceae</taxon>
        <taxon>Fervidobacterium</taxon>
    </lineage>
</organism>
<proteinExistence type="inferred from homology"/>
<evidence type="ECO:0000255" key="1">
    <source>
        <dbReference type="HAMAP-Rule" id="MF_01345"/>
    </source>
</evidence>
<evidence type="ECO:0000305" key="2"/>
<reference key="1">
    <citation type="submission" date="2007-07" db="EMBL/GenBank/DDBJ databases">
        <title>Complete sequence of Fervidobacterium nodosum Rt17-B1.</title>
        <authorList>
            <consortium name="US DOE Joint Genome Institute"/>
            <person name="Copeland A."/>
            <person name="Lucas S."/>
            <person name="Lapidus A."/>
            <person name="Barry K."/>
            <person name="Glavina del Rio T."/>
            <person name="Dalin E."/>
            <person name="Tice H."/>
            <person name="Pitluck S."/>
            <person name="Saunders E."/>
            <person name="Brettin T."/>
            <person name="Bruce D."/>
            <person name="Detter J.C."/>
            <person name="Han C."/>
            <person name="Schmutz J."/>
            <person name="Larimer F."/>
            <person name="Land M."/>
            <person name="Hauser L."/>
            <person name="Kyrpides N."/>
            <person name="Mikhailova N."/>
            <person name="Nelson K."/>
            <person name="Gogarten J.P."/>
            <person name="Noll K."/>
            <person name="Richardson P."/>
        </authorList>
    </citation>
    <scope>NUCLEOTIDE SEQUENCE [LARGE SCALE GENOMIC DNA]</scope>
    <source>
        <strain>ATCC 35602 / DSM 5306 / Rt17-B1</strain>
    </source>
</reference>
<sequence>MPKKRLVGVVVSDKMDKTVTVKVERLVKHAKFGKYVKRTKKFYAHDENNACRVGDVVEIEESRPLSKLKRWVVVNILERSKLSETPEIEETIDIEGGSEQ</sequence>